<gene>
    <name type="primary">alr2</name>
    <name type="ordered locus">CA_C3331</name>
</gene>
<feature type="chain" id="PRO_0000114510" description="Alanine racemase 2">
    <location>
        <begin position="1"/>
        <end position="395"/>
    </location>
</feature>
<feature type="active site" description="Proton acceptor; specific for D-alanine" evidence="1">
    <location>
        <position position="60"/>
    </location>
</feature>
<feature type="active site" description="Proton acceptor; specific for L-alanine" evidence="1">
    <location>
        <position position="288"/>
    </location>
</feature>
<feature type="binding site" evidence="1">
    <location>
        <position position="158"/>
    </location>
    <ligand>
        <name>substrate</name>
    </ligand>
</feature>
<feature type="binding site" evidence="1">
    <location>
        <position position="332"/>
    </location>
    <ligand>
        <name>substrate</name>
    </ligand>
</feature>
<feature type="modified residue" description="N6-(pyridoxal phosphate)lysine" evidence="1">
    <location>
        <position position="60"/>
    </location>
</feature>
<protein>
    <recommendedName>
        <fullName evidence="1">Alanine racemase 2</fullName>
        <ecNumber evidence="1">5.1.1.1</ecNumber>
    </recommendedName>
</protein>
<organism>
    <name type="scientific">Clostridium acetobutylicum (strain ATCC 824 / DSM 792 / JCM 1419 / IAM 19013 / LMG 5710 / NBRC 13948 / NRRL B-527 / VKM B-1787 / 2291 / W)</name>
    <dbReference type="NCBI Taxonomy" id="272562"/>
    <lineage>
        <taxon>Bacteria</taxon>
        <taxon>Bacillati</taxon>
        <taxon>Bacillota</taxon>
        <taxon>Clostridia</taxon>
        <taxon>Eubacteriales</taxon>
        <taxon>Clostridiaceae</taxon>
        <taxon>Clostridium</taxon>
    </lineage>
</organism>
<comment type="function">
    <text evidence="1">Catalyzes the interconversion of L-alanine and D-alanine. May also act on other amino acids.</text>
</comment>
<comment type="catalytic activity">
    <reaction evidence="1">
        <text>L-alanine = D-alanine</text>
        <dbReference type="Rhea" id="RHEA:20249"/>
        <dbReference type="ChEBI" id="CHEBI:57416"/>
        <dbReference type="ChEBI" id="CHEBI:57972"/>
        <dbReference type="EC" id="5.1.1.1"/>
    </reaction>
</comment>
<comment type="cofactor">
    <cofactor evidence="1">
        <name>pyridoxal 5'-phosphate</name>
        <dbReference type="ChEBI" id="CHEBI:597326"/>
    </cofactor>
</comment>
<comment type="pathway">
    <text evidence="1">Amino-acid biosynthesis; D-alanine biosynthesis; D-alanine from L-alanine: step 1/1.</text>
</comment>
<comment type="similarity">
    <text evidence="1">Belongs to the alanine racemase family.</text>
</comment>
<dbReference type="EC" id="5.1.1.1" evidence="1"/>
<dbReference type="EMBL" id="AE001437">
    <property type="protein sequence ID" value="AAK81263.1"/>
    <property type="molecule type" value="Genomic_DNA"/>
</dbReference>
<dbReference type="PIR" id="D97309">
    <property type="entry name" value="D97309"/>
</dbReference>
<dbReference type="RefSeq" id="NP_349923.1">
    <property type="nucleotide sequence ID" value="NC_003030.1"/>
</dbReference>
<dbReference type="SMR" id="Q97DY9"/>
<dbReference type="STRING" id="272562.CA_C3331"/>
<dbReference type="KEGG" id="cac:CA_C3331"/>
<dbReference type="PATRIC" id="fig|272562.8.peg.3511"/>
<dbReference type="eggNOG" id="COG0787">
    <property type="taxonomic scope" value="Bacteria"/>
</dbReference>
<dbReference type="HOGENOM" id="CLU_028393_2_2_9"/>
<dbReference type="OrthoDB" id="9813814at2"/>
<dbReference type="UniPathway" id="UPA00042">
    <property type="reaction ID" value="UER00497"/>
</dbReference>
<dbReference type="Proteomes" id="UP000000814">
    <property type="component" value="Chromosome"/>
</dbReference>
<dbReference type="GO" id="GO:0005829">
    <property type="term" value="C:cytosol"/>
    <property type="evidence" value="ECO:0007669"/>
    <property type="project" value="TreeGrafter"/>
</dbReference>
<dbReference type="GO" id="GO:0008784">
    <property type="term" value="F:alanine racemase activity"/>
    <property type="evidence" value="ECO:0007669"/>
    <property type="project" value="UniProtKB-UniRule"/>
</dbReference>
<dbReference type="GO" id="GO:0030170">
    <property type="term" value="F:pyridoxal phosphate binding"/>
    <property type="evidence" value="ECO:0007669"/>
    <property type="project" value="UniProtKB-UniRule"/>
</dbReference>
<dbReference type="GO" id="GO:0030632">
    <property type="term" value="P:D-alanine biosynthetic process"/>
    <property type="evidence" value="ECO:0007669"/>
    <property type="project" value="UniProtKB-UniRule"/>
</dbReference>
<dbReference type="CDD" id="cd00430">
    <property type="entry name" value="PLPDE_III_AR"/>
    <property type="match status" value="1"/>
</dbReference>
<dbReference type="FunFam" id="3.20.20.10:FF:000002">
    <property type="entry name" value="Alanine racemase"/>
    <property type="match status" value="1"/>
</dbReference>
<dbReference type="Gene3D" id="3.20.20.10">
    <property type="entry name" value="Alanine racemase"/>
    <property type="match status" value="1"/>
</dbReference>
<dbReference type="Gene3D" id="2.40.37.10">
    <property type="entry name" value="Lyase, Ornithine Decarboxylase, Chain A, domain 1"/>
    <property type="match status" value="1"/>
</dbReference>
<dbReference type="HAMAP" id="MF_01201">
    <property type="entry name" value="Ala_racemase"/>
    <property type="match status" value="1"/>
</dbReference>
<dbReference type="InterPro" id="IPR000821">
    <property type="entry name" value="Ala_racemase"/>
</dbReference>
<dbReference type="InterPro" id="IPR009006">
    <property type="entry name" value="Ala_racemase/Decarboxylase_C"/>
</dbReference>
<dbReference type="InterPro" id="IPR011079">
    <property type="entry name" value="Ala_racemase_C"/>
</dbReference>
<dbReference type="InterPro" id="IPR001608">
    <property type="entry name" value="Ala_racemase_N"/>
</dbReference>
<dbReference type="InterPro" id="IPR020622">
    <property type="entry name" value="Ala_racemase_pyridoxalP-BS"/>
</dbReference>
<dbReference type="InterPro" id="IPR029066">
    <property type="entry name" value="PLP-binding_barrel"/>
</dbReference>
<dbReference type="NCBIfam" id="TIGR00492">
    <property type="entry name" value="alr"/>
    <property type="match status" value="1"/>
</dbReference>
<dbReference type="PANTHER" id="PTHR30511">
    <property type="entry name" value="ALANINE RACEMASE"/>
    <property type="match status" value="1"/>
</dbReference>
<dbReference type="PANTHER" id="PTHR30511:SF0">
    <property type="entry name" value="ALANINE RACEMASE, CATABOLIC-RELATED"/>
    <property type="match status" value="1"/>
</dbReference>
<dbReference type="Pfam" id="PF00842">
    <property type="entry name" value="Ala_racemase_C"/>
    <property type="match status" value="1"/>
</dbReference>
<dbReference type="Pfam" id="PF01168">
    <property type="entry name" value="Ala_racemase_N"/>
    <property type="match status" value="1"/>
</dbReference>
<dbReference type="PRINTS" id="PR00992">
    <property type="entry name" value="ALARACEMASE"/>
</dbReference>
<dbReference type="SMART" id="SM01005">
    <property type="entry name" value="Ala_racemase_C"/>
    <property type="match status" value="1"/>
</dbReference>
<dbReference type="SUPFAM" id="SSF50621">
    <property type="entry name" value="Alanine racemase C-terminal domain-like"/>
    <property type="match status" value="1"/>
</dbReference>
<dbReference type="SUPFAM" id="SSF51419">
    <property type="entry name" value="PLP-binding barrel"/>
    <property type="match status" value="1"/>
</dbReference>
<dbReference type="PROSITE" id="PS00395">
    <property type="entry name" value="ALANINE_RACEMASE"/>
    <property type="match status" value="1"/>
</dbReference>
<proteinExistence type="inferred from homology"/>
<sequence>MEKKTVYNITNSIAISEEEAVNCNIPEVNKAEINLSQLKRNFDIIQGFLKPNTKFMAVLKGDAYGHGIRPIAKELINLKCDVFGVVRLIEAFTLRKAGIKTPIMLLAPISPSQAAWVIRYNIIPMVDSEEIVEALDQSASQNDTIVKLHVKINTGLNRYGVNPENAVKFIREIHEKYLHVQVDGVYTHFQDPDYNPDFTHKQIECFNNIIFQLQKQKLRPRIIHAANSTGIIRYPEAHYDMVRCGTLLFGLEHEQGQRNMPKGIKTLMELKGRIMKVRTIRAGEAGGYGSTFVAKKDSKVAIIAFGYGDGISRGWKEVLVAGKRVPVVNYFMDGLMVDISNIDETVKELDEAVIVGNQGDESITWLEACKSLGSYVDEQIQCITERVPKKYFYEK</sequence>
<accession>Q97DY9</accession>
<reference key="1">
    <citation type="journal article" date="2001" name="J. Bacteriol.">
        <title>Genome sequence and comparative analysis of the solvent-producing bacterium Clostridium acetobutylicum.</title>
        <authorList>
            <person name="Noelling J."/>
            <person name="Breton G."/>
            <person name="Omelchenko M.V."/>
            <person name="Makarova K.S."/>
            <person name="Zeng Q."/>
            <person name="Gibson R."/>
            <person name="Lee H.M."/>
            <person name="Dubois J."/>
            <person name="Qiu D."/>
            <person name="Hitti J."/>
            <person name="Wolf Y.I."/>
            <person name="Tatusov R.L."/>
            <person name="Sabathe F."/>
            <person name="Doucette-Stamm L.A."/>
            <person name="Soucaille P."/>
            <person name="Daly M.J."/>
            <person name="Bennett G.N."/>
            <person name="Koonin E.V."/>
            <person name="Smith D.R."/>
        </authorList>
    </citation>
    <scope>NUCLEOTIDE SEQUENCE [LARGE SCALE GENOMIC DNA]</scope>
    <source>
        <strain>ATCC 824 / DSM 792 / JCM 1419 / IAM 19013 / LMG 5710 / NBRC 13948 / NRRL B-527 / VKM B-1787 / 2291 / W</strain>
    </source>
</reference>
<evidence type="ECO:0000255" key="1">
    <source>
        <dbReference type="HAMAP-Rule" id="MF_01201"/>
    </source>
</evidence>
<keyword id="KW-0413">Isomerase</keyword>
<keyword id="KW-0663">Pyridoxal phosphate</keyword>
<keyword id="KW-1185">Reference proteome</keyword>
<name>ALR2_CLOAB</name>